<protein>
    <recommendedName>
        <fullName evidence="1">3-dehydroquinate dehydratase</fullName>
        <shortName evidence="1">3-dehydroquinase</shortName>
        <ecNumber evidence="1">4.2.1.10</ecNumber>
    </recommendedName>
    <alternativeName>
        <fullName evidence="1">Type II DHQase</fullName>
    </alternativeName>
</protein>
<proteinExistence type="inferred from homology"/>
<reference key="1">
    <citation type="submission" date="2007-04" db="EMBL/GenBank/DDBJ databases">
        <title>Genome sequence of the thermophilic hydrogen-producing bacterium Caldicellulosiruptor saccharolyticus DSM 8903.</title>
        <authorList>
            <person name="Copeland A."/>
            <person name="Lucas S."/>
            <person name="Lapidus A."/>
            <person name="Barry K."/>
            <person name="Detter J.C."/>
            <person name="Glavina del Rio T."/>
            <person name="Hammon N."/>
            <person name="Israni S."/>
            <person name="Dalin E."/>
            <person name="Tice H."/>
            <person name="Pitluck S."/>
            <person name="Kiss H."/>
            <person name="Brettin T."/>
            <person name="Bruce D."/>
            <person name="Han C."/>
            <person name="Schmutz J."/>
            <person name="Larimer F."/>
            <person name="Land M."/>
            <person name="Hauser L."/>
            <person name="Kyrpides N."/>
            <person name="Lykidis A."/>
            <person name="van de Werken H.J.G."/>
            <person name="Verhaart M.R.A."/>
            <person name="VanFossen A.L."/>
            <person name="Lewis D.L."/>
            <person name="Nichols J.D."/>
            <person name="Goorissen H.P."/>
            <person name="van Niel E.W.J."/>
            <person name="Stams F.J.M."/>
            <person name="Willquist K.U."/>
            <person name="Ward D.E."/>
            <person name="van der Oost J."/>
            <person name="Kelly R.M."/>
            <person name="Kengen S.M.W."/>
            <person name="Richardson P."/>
        </authorList>
    </citation>
    <scope>NUCLEOTIDE SEQUENCE [LARGE SCALE GENOMIC DNA]</scope>
    <source>
        <strain>ATCC 43494 / DSM 8903 / Tp8T 6331</strain>
    </source>
</reference>
<evidence type="ECO:0000255" key="1">
    <source>
        <dbReference type="HAMAP-Rule" id="MF_00169"/>
    </source>
</evidence>
<organism>
    <name type="scientific">Caldicellulosiruptor saccharolyticus (strain ATCC 43494 / DSM 8903 / Tp8T 6331)</name>
    <dbReference type="NCBI Taxonomy" id="351627"/>
    <lineage>
        <taxon>Bacteria</taxon>
        <taxon>Bacillati</taxon>
        <taxon>Bacillota</taxon>
        <taxon>Bacillota incertae sedis</taxon>
        <taxon>Caldicellulosiruptorales</taxon>
        <taxon>Caldicellulosiruptoraceae</taxon>
        <taxon>Caldicellulosiruptor</taxon>
    </lineage>
</organism>
<feature type="chain" id="PRO_1000097595" description="3-dehydroquinate dehydratase">
    <location>
        <begin position="1"/>
        <end position="145"/>
    </location>
</feature>
<feature type="active site" description="Proton acceptor" evidence="1">
    <location>
        <position position="23"/>
    </location>
</feature>
<feature type="active site" description="Proton donor" evidence="1">
    <location>
        <position position="101"/>
    </location>
</feature>
<feature type="binding site" evidence="1">
    <location>
        <position position="75"/>
    </location>
    <ligand>
        <name>substrate</name>
    </ligand>
</feature>
<feature type="binding site" evidence="1">
    <location>
        <position position="81"/>
    </location>
    <ligand>
        <name>substrate</name>
    </ligand>
</feature>
<feature type="binding site" evidence="1">
    <location>
        <position position="88"/>
    </location>
    <ligand>
        <name>substrate</name>
    </ligand>
</feature>
<feature type="binding site" evidence="1">
    <location>
        <begin position="102"/>
        <end position="103"/>
    </location>
    <ligand>
        <name>substrate</name>
    </ligand>
</feature>
<feature type="binding site" evidence="1">
    <location>
        <position position="112"/>
    </location>
    <ligand>
        <name>substrate</name>
    </ligand>
</feature>
<feature type="site" description="Transition state stabilizer" evidence="1">
    <location>
        <position position="18"/>
    </location>
</feature>
<comment type="function">
    <text evidence="1">Catalyzes a trans-dehydration via an enolate intermediate.</text>
</comment>
<comment type="catalytic activity">
    <reaction evidence="1">
        <text>3-dehydroquinate = 3-dehydroshikimate + H2O</text>
        <dbReference type="Rhea" id="RHEA:21096"/>
        <dbReference type="ChEBI" id="CHEBI:15377"/>
        <dbReference type="ChEBI" id="CHEBI:16630"/>
        <dbReference type="ChEBI" id="CHEBI:32364"/>
        <dbReference type="EC" id="4.2.1.10"/>
    </reaction>
</comment>
<comment type="pathway">
    <text evidence="1">Metabolic intermediate biosynthesis; chorismate biosynthesis; chorismate from D-erythrose 4-phosphate and phosphoenolpyruvate: step 3/7.</text>
</comment>
<comment type="subunit">
    <text evidence="1">Homododecamer.</text>
</comment>
<comment type="similarity">
    <text evidence="1">Belongs to the type-II 3-dehydroquinase family.</text>
</comment>
<accession>A4XLN1</accession>
<gene>
    <name evidence="1" type="primary">aroQ</name>
    <name type="ordered locus">Csac_2238</name>
</gene>
<keyword id="KW-0028">Amino-acid biosynthesis</keyword>
<keyword id="KW-0057">Aromatic amino acid biosynthesis</keyword>
<keyword id="KW-0456">Lyase</keyword>
<sequence>MKKILVINGPNLNLLGIREKDIYGSTNYNKLLEIISKKANELNLNTLFFQSNHEGEIIDRIHKALDENIDGIIINPGAYTHYSYAIHDAIKAVNIPTIEVHISNIYAREEFRKRSVIAPACVGQISGFGIKSYIIALYALKEILG</sequence>
<dbReference type="EC" id="4.2.1.10" evidence="1"/>
<dbReference type="EMBL" id="CP000679">
    <property type="protein sequence ID" value="ABP67816.1"/>
    <property type="molecule type" value="Genomic_DNA"/>
</dbReference>
<dbReference type="RefSeq" id="WP_011917742.1">
    <property type="nucleotide sequence ID" value="NC_009437.1"/>
</dbReference>
<dbReference type="SMR" id="A4XLN1"/>
<dbReference type="STRING" id="351627.Csac_2238"/>
<dbReference type="KEGG" id="csc:Csac_2238"/>
<dbReference type="eggNOG" id="COG0757">
    <property type="taxonomic scope" value="Bacteria"/>
</dbReference>
<dbReference type="HOGENOM" id="CLU_090968_3_0_9"/>
<dbReference type="OrthoDB" id="9790793at2"/>
<dbReference type="UniPathway" id="UPA00053">
    <property type="reaction ID" value="UER00086"/>
</dbReference>
<dbReference type="Proteomes" id="UP000000256">
    <property type="component" value="Chromosome"/>
</dbReference>
<dbReference type="GO" id="GO:0003855">
    <property type="term" value="F:3-dehydroquinate dehydratase activity"/>
    <property type="evidence" value="ECO:0007669"/>
    <property type="project" value="UniProtKB-UniRule"/>
</dbReference>
<dbReference type="GO" id="GO:0008652">
    <property type="term" value="P:amino acid biosynthetic process"/>
    <property type="evidence" value="ECO:0007669"/>
    <property type="project" value="UniProtKB-KW"/>
</dbReference>
<dbReference type="GO" id="GO:0009073">
    <property type="term" value="P:aromatic amino acid family biosynthetic process"/>
    <property type="evidence" value="ECO:0007669"/>
    <property type="project" value="UniProtKB-KW"/>
</dbReference>
<dbReference type="GO" id="GO:0009423">
    <property type="term" value="P:chorismate biosynthetic process"/>
    <property type="evidence" value="ECO:0007669"/>
    <property type="project" value="UniProtKB-UniRule"/>
</dbReference>
<dbReference type="GO" id="GO:0019631">
    <property type="term" value="P:quinate catabolic process"/>
    <property type="evidence" value="ECO:0007669"/>
    <property type="project" value="TreeGrafter"/>
</dbReference>
<dbReference type="CDD" id="cd00466">
    <property type="entry name" value="DHQase_II"/>
    <property type="match status" value="1"/>
</dbReference>
<dbReference type="Gene3D" id="3.40.50.9100">
    <property type="entry name" value="Dehydroquinase, class II"/>
    <property type="match status" value="1"/>
</dbReference>
<dbReference type="HAMAP" id="MF_00169">
    <property type="entry name" value="AroQ"/>
    <property type="match status" value="1"/>
</dbReference>
<dbReference type="InterPro" id="IPR001874">
    <property type="entry name" value="DHquinase_II"/>
</dbReference>
<dbReference type="InterPro" id="IPR018509">
    <property type="entry name" value="DHquinase_II_CS"/>
</dbReference>
<dbReference type="InterPro" id="IPR036441">
    <property type="entry name" value="DHquinase_II_sf"/>
</dbReference>
<dbReference type="NCBIfam" id="TIGR01088">
    <property type="entry name" value="aroQ"/>
    <property type="match status" value="1"/>
</dbReference>
<dbReference type="NCBIfam" id="NF003805">
    <property type="entry name" value="PRK05395.1-2"/>
    <property type="match status" value="1"/>
</dbReference>
<dbReference type="NCBIfam" id="NF003806">
    <property type="entry name" value="PRK05395.1-3"/>
    <property type="match status" value="1"/>
</dbReference>
<dbReference type="NCBIfam" id="NF003807">
    <property type="entry name" value="PRK05395.1-4"/>
    <property type="match status" value="1"/>
</dbReference>
<dbReference type="PANTHER" id="PTHR21272">
    <property type="entry name" value="CATABOLIC 3-DEHYDROQUINASE"/>
    <property type="match status" value="1"/>
</dbReference>
<dbReference type="PANTHER" id="PTHR21272:SF3">
    <property type="entry name" value="CATABOLIC 3-DEHYDROQUINASE"/>
    <property type="match status" value="1"/>
</dbReference>
<dbReference type="Pfam" id="PF01220">
    <property type="entry name" value="DHquinase_II"/>
    <property type="match status" value="1"/>
</dbReference>
<dbReference type="PIRSF" id="PIRSF001399">
    <property type="entry name" value="DHquinase_II"/>
    <property type="match status" value="1"/>
</dbReference>
<dbReference type="SUPFAM" id="SSF52304">
    <property type="entry name" value="Type II 3-dehydroquinate dehydratase"/>
    <property type="match status" value="1"/>
</dbReference>
<dbReference type="PROSITE" id="PS01029">
    <property type="entry name" value="DEHYDROQUINASE_II"/>
    <property type="match status" value="1"/>
</dbReference>
<name>AROQ_CALS8</name>